<accession>P64293</accession>
<accession>A0A1R3Y5A1</accession>
<accession>P72055</accession>
<accession>X2BPU5</accession>
<comment type="function">
    <text evidence="1">Required for arabinosylation of arabinogalactan (AG), an essential component of the mycobacterial cell wall. Probably acts as an anchor protein recruiting AftA, the first arabinosyl transferase involved in AG biosynthesis.</text>
</comment>
<comment type="pathway">
    <text evidence="1">Cell wall biogenesis; cell wall polysaccharide biosynthesis.</text>
</comment>
<comment type="subunit">
    <text evidence="1">Interacts with the priming arabinosyltransferase AftA.</text>
</comment>
<comment type="subcellular location">
    <subcellularLocation>
        <location evidence="1">Cell inner membrane</location>
        <topology evidence="1 2">Multi-pass membrane protein</topology>
    </subcellularLocation>
</comment>
<comment type="similarity">
    <text evidence="3">Belongs to the GtrA family.</text>
</comment>
<protein>
    <recommendedName>
        <fullName>Arabinogalactan biosynthesis recruiting protein Mb3818</fullName>
    </recommendedName>
</protein>
<reference key="1">
    <citation type="journal article" date="2003" name="Proc. Natl. Acad. Sci. U.S.A.">
        <title>The complete genome sequence of Mycobacterium bovis.</title>
        <authorList>
            <person name="Garnier T."/>
            <person name="Eiglmeier K."/>
            <person name="Camus J.-C."/>
            <person name="Medina N."/>
            <person name="Mansoor H."/>
            <person name="Pryor M."/>
            <person name="Duthoy S."/>
            <person name="Grondin S."/>
            <person name="Lacroix C."/>
            <person name="Monsempe C."/>
            <person name="Simon S."/>
            <person name="Harris B."/>
            <person name="Atkin R."/>
            <person name="Doggett J."/>
            <person name="Mayes R."/>
            <person name="Keating L."/>
            <person name="Wheeler P.R."/>
            <person name="Parkhill J."/>
            <person name="Barrell B.G."/>
            <person name="Cole S.T."/>
            <person name="Gordon S.V."/>
            <person name="Hewinson R.G."/>
        </authorList>
    </citation>
    <scope>NUCLEOTIDE SEQUENCE [LARGE SCALE GENOMIC DNA]</scope>
    <source>
        <strain>ATCC BAA-935 / AF2122/97</strain>
    </source>
</reference>
<reference key="2">
    <citation type="journal article" date="2017" name="Genome Announc.">
        <title>Updated reference genome sequence and annotation of Mycobacterium bovis AF2122/97.</title>
        <authorList>
            <person name="Malone K.M."/>
            <person name="Farrell D."/>
            <person name="Stuber T.P."/>
            <person name="Schubert O.T."/>
            <person name="Aebersold R."/>
            <person name="Robbe-Austerman S."/>
            <person name="Gordon S.V."/>
        </authorList>
    </citation>
    <scope>NUCLEOTIDE SEQUENCE [LARGE SCALE GENOMIC DNA]</scope>
    <scope>GENOME REANNOTATION</scope>
    <source>
        <strain>ATCC BAA-935 / AF2122/97</strain>
    </source>
</reference>
<sequence length="121" mass="13377">MRFVVTGGLAGIVDFGLYVVLYKVAGLQVDLSKAISFIVGTITAYLINRRWTFQAEPSTARFVAVMLLYGITFAVQVGLNHLCLALLHYRAWAIPVAFVIAQGTATVINFIVQRAVIFRIR</sequence>
<evidence type="ECO:0000250" key="1">
    <source>
        <dbReference type="UniProtKB" id="P9WMS9"/>
    </source>
</evidence>
<evidence type="ECO:0000255" key="2"/>
<evidence type="ECO:0000305" key="3"/>
<organism>
    <name type="scientific">Mycobacterium bovis (strain ATCC BAA-935 / AF2122/97)</name>
    <dbReference type="NCBI Taxonomy" id="233413"/>
    <lineage>
        <taxon>Bacteria</taxon>
        <taxon>Bacillati</taxon>
        <taxon>Actinomycetota</taxon>
        <taxon>Actinomycetes</taxon>
        <taxon>Mycobacteriales</taxon>
        <taxon>Mycobacteriaceae</taxon>
        <taxon>Mycobacterium</taxon>
        <taxon>Mycobacterium tuberculosis complex</taxon>
    </lineage>
</organism>
<keyword id="KW-0997">Cell inner membrane</keyword>
<keyword id="KW-1003">Cell membrane</keyword>
<keyword id="KW-0961">Cell wall biogenesis/degradation</keyword>
<keyword id="KW-0472">Membrane</keyword>
<keyword id="KW-1185">Reference proteome</keyword>
<keyword id="KW-0812">Transmembrane</keyword>
<keyword id="KW-1133">Transmembrane helix</keyword>
<dbReference type="EMBL" id="LT708304">
    <property type="protein sequence ID" value="SIU02447.1"/>
    <property type="molecule type" value="Genomic_DNA"/>
</dbReference>
<dbReference type="RefSeq" id="NP_857455.1">
    <property type="nucleotide sequence ID" value="NC_002945.3"/>
</dbReference>
<dbReference type="RefSeq" id="WP_003420627.1">
    <property type="nucleotide sequence ID" value="NC_002945.4"/>
</dbReference>
<dbReference type="KEGG" id="mbo:BQ2027_MB3818"/>
<dbReference type="PATRIC" id="fig|233413.5.peg.4175"/>
<dbReference type="UniPathway" id="UPA00963"/>
<dbReference type="Proteomes" id="UP000001419">
    <property type="component" value="Chromosome"/>
</dbReference>
<dbReference type="GO" id="GO:0005886">
    <property type="term" value="C:plasma membrane"/>
    <property type="evidence" value="ECO:0007669"/>
    <property type="project" value="UniProtKB-SubCell"/>
</dbReference>
<dbReference type="GO" id="GO:0045227">
    <property type="term" value="P:capsule polysaccharide biosynthetic process"/>
    <property type="evidence" value="ECO:0007669"/>
    <property type="project" value="UniProtKB-UniPathway"/>
</dbReference>
<dbReference type="GO" id="GO:0071555">
    <property type="term" value="P:cell wall organization"/>
    <property type="evidence" value="ECO:0007669"/>
    <property type="project" value="UniProtKB-KW"/>
</dbReference>
<dbReference type="InterPro" id="IPR051401">
    <property type="entry name" value="GtrA_CellWall_Glycosyl"/>
</dbReference>
<dbReference type="InterPro" id="IPR007267">
    <property type="entry name" value="GtrA_DPMS_TM"/>
</dbReference>
<dbReference type="PANTHER" id="PTHR38459:SF6">
    <property type="entry name" value="ARABINOGALACTAN BIOSYNTHESIS RECRUITING PROTEIN RV3789"/>
    <property type="match status" value="1"/>
</dbReference>
<dbReference type="PANTHER" id="PTHR38459">
    <property type="entry name" value="PROPHAGE BACTOPRENOL-LINKED GLUCOSE TRANSLOCASE HOMOLOG"/>
    <property type="match status" value="1"/>
</dbReference>
<dbReference type="Pfam" id="PF04138">
    <property type="entry name" value="GtrA_DPMS_TM"/>
    <property type="match status" value="1"/>
</dbReference>
<gene>
    <name type="ordered locus">BQ2027_MB3818</name>
</gene>
<proteinExistence type="inferred from homology"/>
<feature type="chain" id="PRO_0000212258" description="Arabinogalactan biosynthesis recruiting protein Mb3818">
    <location>
        <begin position="1"/>
        <end position="121"/>
    </location>
</feature>
<feature type="topological domain" description="Cytoplasmic" evidence="1">
    <location>
        <begin position="1"/>
        <end position="2"/>
    </location>
</feature>
<feature type="transmembrane region" description="Helical" evidence="2">
    <location>
        <begin position="3"/>
        <end position="23"/>
    </location>
</feature>
<feature type="topological domain" description="Periplasmic" evidence="1">
    <location>
        <begin position="24"/>
        <end position="26"/>
    </location>
</feature>
<feature type="transmembrane region" description="Helical" evidence="2">
    <location>
        <begin position="27"/>
        <end position="47"/>
    </location>
</feature>
<feature type="topological domain" description="Cytoplasmic" evidence="1">
    <location>
        <begin position="48"/>
        <end position="61"/>
    </location>
</feature>
<feature type="transmembrane region" description="Helical" evidence="2">
    <location>
        <begin position="62"/>
        <end position="82"/>
    </location>
</feature>
<feature type="topological domain" description="Periplasmic" evidence="1">
    <location>
        <begin position="83"/>
        <end position="91"/>
    </location>
</feature>
<feature type="transmembrane region" description="Helical" evidence="2">
    <location>
        <begin position="92"/>
        <end position="112"/>
    </location>
</feature>
<feature type="topological domain" description="Cytoplasmic" evidence="1">
    <location>
        <begin position="113"/>
        <end position="121"/>
    </location>
</feature>
<name>AGBR_MYCBO</name>